<reference evidence="2" key="1">
    <citation type="journal article" date="2000" name="Biochem. Biophys. Res. Commun.">
        <title>ILME: a waterborne pheromonal peptide released by the eggs of Sepia officinalis.</title>
        <authorList>
            <person name="Zatylny C."/>
            <person name="Gagnon J."/>
            <person name="Boucaud-Camou E."/>
            <person name="Henry J."/>
        </authorList>
    </citation>
    <scope>PROTEIN SEQUENCE</scope>
    <scope>SUBCELLULAR LOCATION</scope>
    <scope>TISSUE SPECIFICITY</scope>
    <scope>MASS SPECTROMETRY</scope>
    <source>
        <tissue>Egg</tissue>
    </source>
</reference>
<reference evidence="2" key="2">
    <citation type="journal article" date="2002" name="Biochem. Biophys. Res. Commun.">
        <title>Fertilization in Sepia officinalis: the first mollusk sperm-attracting peptide.</title>
        <authorList>
            <person name="Zatylny C."/>
            <person name="Marvin L."/>
            <person name="Gagnon J."/>
            <person name="Henry J."/>
        </authorList>
    </citation>
    <scope>PROTEIN SEQUENCE</scope>
    <source>
        <tissue>Egg</tissue>
    </source>
</reference>
<dbReference type="GO" id="GO:0005576">
    <property type="term" value="C:extracellular region"/>
    <property type="evidence" value="ECO:0007669"/>
    <property type="project" value="UniProtKB-SubCell"/>
</dbReference>
<dbReference type="GO" id="GO:0005186">
    <property type="term" value="F:pheromone activity"/>
    <property type="evidence" value="ECO:0007669"/>
    <property type="project" value="UniProtKB-KW"/>
</dbReference>
<keyword id="KW-0903">Direct protein sequencing</keyword>
<keyword id="KW-0588">Pheromone</keyword>
<keyword id="KW-0964">Secreted</keyword>
<proteinExistence type="evidence at protein level"/>
<accession>P83568</accession>
<comment type="function">
    <text evidence="1">Has myotropic activity targeting the genital tract.</text>
</comment>
<comment type="subcellular location">
    <subcellularLocation>
        <location evidence="1">Secreted</location>
    </subcellularLocation>
</comment>
<comment type="tissue specificity">
    <text evidence="1">Follicle, fully grown oocyte and egg(EC2).</text>
</comment>
<comment type="mass spectrometry" mass="505.4" method="MALDI" evidence="1"/>
<name>ILME_SEPOF</name>
<protein>
    <recommendedName>
        <fullName>Pheromone peptide ILME</fullName>
    </recommendedName>
</protein>
<evidence type="ECO:0000269" key="1">
    <source>
    </source>
</evidence>
<evidence type="ECO:0000305" key="2"/>
<organism evidence="2">
    <name type="scientific">Sepia officinalis</name>
    <name type="common">Common cuttlefish</name>
    <dbReference type="NCBI Taxonomy" id="6610"/>
    <lineage>
        <taxon>Eukaryota</taxon>
        <taxon>Metazoa</taxon>
        <taxon>Spiralia</taxon>
        <taxon>Lophotrochozoa</taxon>
        <taxon>Mollusca</taxon>
        <taxon>Cephalopoda</taxon>
        <taxon>Coleoidea</taxon>
        <taxon>Decapodiformes</taxon>
        <taxon>Sepiida</taxon>
        <taxon>Sepiina</taxon>
        <taxon>Sepiidae</taxon>
        <taxon>Sepia</taxon>
    </lineage>
</organism>
<feature type="peptide" id="PRO_0000044150" description="Pheromone peptide ILME">
    <location>
        <begin position="1"/>
        <end position="4"/>
    </location>
</feature>
<sequence length="4" mass="505">ILME</sequence>